<proteinExistence type="inferred from homology"/>
<reference key="1">
    <citation type="journal article" date="2001" name="Nature">
        <title>Complete genome sequence of a multiple drug resistant Salmonella enterica serovar Typhi CT18.</title>
        <authorList>
            <person name="Parkhill J."/>
            <person name="Dougan G."/>
            <person name="James K.D."/>
            <person name="Thomson N.R."/>
            <person name="Pickard D."/>
            <person name="Wain J."/>
            <person name="Churcher C.M."/>
            <person name="Mungall K.L."/>
            <person name="Bentley S.D."/>
            <person name="Holden M.T.G."/>
            <person name="Sebaihia M."/>
            <person name="Baker S."/>
            <person name="Basham D."/>
            <person name="Brooks K."/>
            <person name="Chillingworth T."/>
            <person name="Connerton P."/>
            <person name="Cronin A."/>
            <person name="Davis P."/>
            <person name="Davies R.M."/>
            <person name="Dowd L."/>
            <person name="White N."/>
            <person name="Farrar J."/>
            <person name="Feltwell T."/>
            <person name="Hamlin N."/>
            <person name="Haque A."/>
            <person name="Hien T.T."/>
            <person name="Holroyd S."/>
            <person name="Jagels K."/>
            <person name="Krogh A."/>
            <person name="Larsen T.S."/>
            <person name="Leather S."/>
            <person name="Moule S."/>
            <person name="O'Gaora P."/>
            <person name="Parry C."/>
            <person name="Quail M.A."/>
            <person name="Rutherford K.M."/>
            <person name="Simmonds M."/>
            <person name="Skelton J."/>
            <person name="Stevens K."/>
            <person name="Whitehead S."/>
            <person name="Barrell B.G."/>
        </authorList>
    </citation>
    <scope>NUCLEOTIDE SEQUENCE [LARGE SCALE GENOMIC DNA]</scope>
    <source>
        <strain>CT18</strain>
    </source>
</reference>
<reference key="2">
    <citation type="journal article" date="2003" name="J. Bacteriol.">
        <title>Comparative genomics of Salmonella enterica serovar Typhi strains Ty2 and CT18.</title>
        <authorList>
            <person name="Deng W."/>
            <person name="Liou S.-R."/>
            <person name="Plunkett G. III"/>
            <person name="Mayhew G.F."/>
            <person name="Rose D.J."/>
            <person name="Burland V."/>
            <person name="Kodoyianni V."/>
            <person name="Schwartz D.C."/>
            <person name="Blattner F.R."/>
        </authorList>
    </citation>
    <scope>NUCLEOTIDE SEQUENCE [LARGE SCALE GENOMIC DNA]</scope>
    <source>
        <strain>ATCC 700931 / Ty2</strain>
    </source>
</reference>
<accession>P58539</accession>
<sequence>MTIFDNYEVWFVIGSQHLYGAETLRQVTQHAEHVVNALNTEAKLPCKLVLKPLGTSPDEITAICRDANYDDRCAGLVVWLHTFSPAKMWINGLSILNKPLLQFHTQFNAALPWDSIDMDFMNLNQTAHGGREFGFIGARMRQQHAVVTGHWQDKEAHTRIGAWMRQAVSKQDTRQLKVCRFGDNMREVAVTDGDKVAAQIKFGFSVNTWAVGDLVQVVNSIGDGDISALIDEYESSYTLTPATQIHGDKRQNVREAARIELGMKRFLEQGGFHAFTTTFEDLHGLKQLPGLAVQRLMQQGYGFAGEGDWKTAALLRIMKVMSTGLQGGTSFMEDYTDHFEKGNDLVLGSHMLEVCPSIAVEEKPILDVQHLGIGGKEDPARLIFNTQTGPAIVASLIDLGDRYRLLVNCIDTVKTPHSLPKLPVANALWKAQPDLPTASEAWILAGGAHHTVFSHALDLNDMRQFAEIHDIEIAVIDNDTRLPAFKDALRWNEVYYGLKR</sequence>
<name>ARAA_SALTI</name>
<organism>
    <name type="scientific">Salmonella typhi</name>
    <dbReference type="NCBI Taxonomy" id="90370"/>
    <lineage>
        <taxon>Bacteria</taxon>
        <taxon>Pseudomonadati</taxon>
        <taxon>Pseudomonadota</taxon>
        <taxon>Gammaproteobacteria</taxon>
        <taxon>Enterobacterales</taxon>
        <taxon>Enterobacteriaceae</taxon>
        <taxon>Salmonella</taxon>
    </lineage>
</organism>
<gene>
    <name evidence="1" type="primary">araA</name>
    <name type="ordered locus">STY0119</name>
    <name type="ordered locus">t0106</name>
</gene>
<feature type="chain" id="PRO_0000198392" description="L-arabinose isomerase">
    <location>
        <begin position="1"/>
        <end position="500"/>
    </location>
</feature>
<feature type="binding site" evidence="1">
    <location>
        <position position="306"/>
    </location>
    <ligand>
        <name>Mn(2+)</name>
        <dbReference type="ChEBI" id="CHEBI:29035"/>
    </ligand>
</feature>
<feature type="binding site" evidence="1">
    <location>
        <position position="333"/>
    </location>
    <ligand>
        <name>Mn(2+)</name>
        <dbReference type="ChEBI" id="CHEBI:29035"/>
    </ligand>
</feature>
<feature type="binding site" evidence="1">
    <location>
        <position position="350"/>
    </location>
    <ligand>
        <name>Mn(2+)</name>
        <dbReference type="ChEBI" id="CHEBI:29035"/>
    </ligand>
</feature>
<feature type="binding site" evidence="1">
    <location>
        <position position="450"/>
    </location>
    <ligand>
        <name>Mn(2+)</name>
        <dbReference type="ChEBI" id="CHEBI:29035"/>
    </ligand>
</feature>
<dbReference type="EC" id="5.3.1.4" evidence="1"/>
<dbReference type="EMBL" id="AL513382">
    <property type="protein sequence ID" value="CAD01259.1"/>
    <property type="molecule type" value="Genomic_DNA"/>
</dbReference>
<dbReference type="EMBL" id="AE014613">
    <property type="protein sequence ID" value="AAO67838.1"/>
    <property type="molecule type" value="Genomic_DNA"/>
</dbReference>
<dbReference type="RefSeq" id="NP_454714.1">
    <property type="nucleotide sequence ID" value="NC_003198.1"/>
</dbReference>
<dbReference type="RefSeq" id="WP_000151698.1">
    <property type="nucleotide sequence ID" value="NZ_WSUR01000028.1"/>
</dbReference>
<dbReference type="SMR" id="P58539"/>
<dbReference type="STRING" id="220341.gene:17584161"/>
<dbReference type="KEGG" id="stt:t0106"/>
<dbReference type="KEGG" id="sty:STY0119"/>
<dbReference type="PATRIC" id="fig|220341.7.peg.119"/>
<dbReference type="eggNOG" id="COG2160">
    <property type="taxonomic scope" value="Bacteria"/>
</dbReference>
<dbReference type="HOGENOM" id="CLU_045663_0_0_6"/>
<dbReference type="OMA" id="LMEDYTY"/>
<dbReference type="OrthoDB" id="9765600at2"/>
<dbReference type="BRENDA" id="5.3.1.4">
    <property type="organism ID" value="5557"/>
</dbReference>
<dbReference type="UniPathway" id="UPA00145">
    <property type="reaction ID" value="UER00565"/>
</dbReference>
<dbReference type="Proteomes" id="UP000000541">
    <property type="component" value="Chromosome"/>
</dbReference>
<dbReference type="Proteomes" id="UP000002670">
    <property type="component" value="Chromosome"/>
</dbReference>
<dbReference type="GO" id="GO:0005829">
    <property type="term" value="C:cytosol"/>
    <property type="evidence" value="ECO:0007669"/>
    <property type="project" value="TreeGrafter"/>
</dbReference>
<dbReference type="GO" id="GO:0008733">
    <property type="term" value="F:L-arabinose isomerase activity"/>
    <property type="evidence" value="ECO:0007669"/>
    <property type="project" value="UniProtKB-UniRule"/>
</dbReference>
<dbReference type="GO" id="GO:0030145">
    <property type="term" value="F:manganese ion binding"/>
    <property type="evidence" value="ECO:0007669"/>
    <property type="project" value="UniProtKB-UniRule"/>
</dbReference>
<dbReference type="GO" id="GO:0019569">
    <property type="term" value="P:L-arabinose catabolic process to xylulose 5-phosphate"/>
    <property type="evidence" value="ECO:0007669"/>
    <property type="project" value="UniProtKB-UniRule"/>
</dbReference>
<dbReference type="CDD" id="cd03557">
    <property type="entry name" value="L-arabinose_isomerase"/>
    <property type="match status" value="1"/>
</dbReference>
<dbReference type="FunFam" id="3.40.50.10940:FF:000001">
    <property type="entry name" value="L-arabinose isomerase"/>
    <property type="match status" value="1"/>
</dbReference>
<dbReference type="Gene3D" id="3.40.50.10940">
    <property type="match status" value="1"/>
</dbReference>
<dbReference type="HAMAP" id="MF_00519">
    <property type="entry name" value="Arabinose_Isome"/>
    <property type="match status" value="1"/>
</dbReference>
<dbReference type="InterPro" id="IPR024664">
    <property type="entry name" value="Ara_Isoase_C"/>
</dbReference>
<dbReference type="InterPro" id="IPR055390">
    <property type="entry name" value="AraA_central"/>
</dbReference>
<dbReference type="InterPro" id="IPR055389">
    <property type="entry name" value="AraA_N"/>
</dbReference>
<dbReference type="InterPro" id="IPR038583">
    <property type="entry name" value="AraA_N_sf"/>
</dbReference>
<dbReference type="InterPro" id="IPR004216">
    <property type="entry name" value="Fuc/Ara_isomerase_C"/>
</dbReference>
<dbReference type="InterPro" id="IPR009015">
    <property type="entry name" value="Fucose_isomerase_N/cen_sf"/>
</dbReference>
<dbReference type="InterPro" id="IPR003762">
    <property type="entry name" value="Lara_isomerase"/>
</dbReference>
<dbReference type="NCBIfam" id="NF002795">
    <property type="entry name" value="PRK02929.1"/>
    <property type="match status" value="1"/>
</dbReference>
<dbReference type="PANTHER" id="PTHR38464">
    <property type="entry name" value="L-ARABINOSE ISOMERASE"/>
    <property type="match status" value="1"/>
</dbReference>
<dbReference type="PANTHER" id="PTHR38464:SF1">
    <property type="entry name" value="L-ARABINOSE ISOMERASE"/>
    <property type="match status" value="1"/>
</dbReference>
<dbReference type="Pfam" id="PF24856">
    <property type="entry name" value="AraA_central"/>
    <property type="match status" value="1"/>
</dbReference>
<dbReference type="Pfam" id="PF02610">
    <property type="entry name" value="AraA_N"/>
    <property type="match status" value="1"/>
</dbReference>
<dbReference type="Pfam" id="PF11762">
    <property type="entry name" value="Arabinose_Iso_C"/>
    <property type="match status" value="1"/>
</dbReference>
<dbReference type="PIRSF" id="PIRSF001478">
    <property type="entry name" value="L-ara_isomerase"/>
    <property type="match status" value="1"/>
</dbReference>
<dbReference type="SUPFAM" id="SSF50443">
    <property type="entry name" value="FucI/AraA C-terminal domain-like"/>
    <property type="match status" value="1"/>
</dbReference>
<dbReference type="SUPFAM" id="SSF53743">
    <property type="entry name" value="FucI/AraA N-terminal and middle domains"/>
    <property type="match status" value="1"/>
</dbReference>
<protein>
    <recommendedName>
        <fullName evidence="1">L-arabinose isomerase</fullName>
        <ecNumber evidence="1">5.3.1.4</ecNumber>
    </recommendedName>
</protein>
<evidence type="ECO:0000255" key="1">
    <source>
        <dbReference type="HAMAP-Rule" id="MF_00519"/>
    </source>
</evidence>
<keyword id="KW-0054">Arabinose catabolism</keyword>
<keyword id="KW-0119">Carbohydrate metabolism</keyword>
<keyword id="KW-0413">Isomerase</keyword>
<keyword id="KW-0464">Manganese</keyword>
<keyword id="KW-0479">Metal-binding</keyword>
<comment type="function">
    <text evidence="1">Catalyzes the conversion of L-arabinose to L-ribulose.</text>
</comment>
<comment type="catalytic activity">
    <reaction evidence="1">
        <text>beta-L-arabinopyranose = L-ribulose</text>
        <dbReference type="Rhea" id="RHEA:14821"/>
        <dbReference type="ChEBI" id="CHEBI:16880"/>
        <dbReference type="ChEBI" id="CHEBI:40886"/>
        <dbReference type="EC" id="5.3.1.4"/>
    </reaction>
</comment>
<comment type="cofactor">
    <cofactor evidence="1">
        <name>Mn(2+)</name>
        <dbReference type="ChEBI" id="CHEBI:29035"/>
    </cofactor>
    <text evidence="1">Binds 1 Mn(2+) ion per subunit.</text>
</comment>
<comment type="pathway">
    <text evidence="1">Carbohydrate degradation; L-arabinose degradation via L-ribulose; D-xylulose 5-phosphate from L-arabinose (bacterial route): step 1/3.</text>
</comment>
<comment type="subunit">
    <text evidence="1">Homohexamer.</text>
</comment>
<comment type="similarity">
    <text evidence="1">Belongs to the arabinose isomerase family.</text>
</comment>